<proteinExistence type="inferred from homology"/>
<accession>A2RBX3</accession>
<keyword id="KW-0067">ATP-binding</keyword>
<keyword id="KW-0963">Cytoplasm</keyword>
<keyword id="KW-0235">DNA replication</keyword>
<keyword id="KW-0238">DNA-binding</keyword>
<keyword id="KW-0446">Lipid-binding</keyword>
<keyword id="KW-0547">Nucleotide-binding</keyword>
<evidence type="ECO:0000255" key="1">
    <source>
        <dbReference type="HAMAP-Rule" id="MF_00377"/>
    </source>
</evidence>
<name>DNAA_STRPG</name>
<organism>
    <name type="scientific">Streptococcus pyogenes serotype M5 (strain Manfredo)</name>
    <dbReference type="NCBI Taxonomy" id="160491"/>
    <lineage>
        <taxon>Bacteria</taxon>
        <taxon>Bacillati</taxon>
        <taxon>Bacillota</taxon>
        <taxon>Bacilli</taxon>
        <taxon>Lactobacillales</taxon>
        <taxon>Streptococcaceae</taxon>
        <taxon>Streptococcus</taxon>
    </lineage>
</organism>
<gene>
    <name evidence="1" type="primary">dnaA</name>
    <name type="ordered locus">SpyM50001</name>
</gene>
<feature type="chain" id="PRO_1000048743" description="Chromosomal replication initiator protein DnaA">
    <location>
        <begin position="1"/>
        <end position="451"/>
    </location>
</feature>
<feature type="region of interest" description="Domain I, interacts with DnaA modulators" evidence="1">
    <location>
        <begin position="1"/>
        <end position="77"/>
    </location>
</feature>
<feature type="region of interest" description="Domain II" evidence="1">
    <location>
        <begin position="77"/>
        <end position="110"/>
    </location>
</feature>
<feature type="region of interest" description="Domain III, AAA+ region" evidence="1">
    <location>
        <begin position="111"/>
        <end position="329"/>
    </location>
</feature>
<feature type="region of interest" description="Domain IV, binds dsDNA" evidence="1">
    <location>
        <begin position="330"/>
        <end position="451"/>
    </location>
</feature>
<feature type="binding site" evidence="1">
    <location>
        <position position="155"/>
    </location>
    <ligand>
        <name>ATP</name>
        <dbReference type="ChEBI" id="CHEBI:30616"/>
    </ligand>
</feature>
<feature type="binding site" evidence="1">
    <location>
        <position position="157"/>
    </location>
    <ligand>
        <name>ATP</name>
        <dbReference type="ChEBI" id="CHEBI:30616"/>
    </ligand>
</feature>
<feature type="binding site" evidence="1">
    <location>
        <position position="158"/>
    </location>
    <ligand>
        <name>ATP</name>
        <dbReference type="ChEBI" id="CHEBI:30616"/>
    </ligand>
</feature>
<feature type="binding site" evidence="1">
    <location>
        <position position="159"/>
    </location>
    <ligand>
        <name>ATP</name>
        <dbReference type="ChEBI" id="CHEBI:30616"/>
    </ligand>
</feature>
<comment type="function">
    <text evidence="1">Plays an essential role in the initiation and regulation of chromosomal replication. ATP-DnaA binds to the origin of replication (oriC) to initiate formation of the DNA replication initiation complex once per cell cycle. Binds the DnaA box (a 9 base pair repeat at the origin) and separates the double-stranded (ds)DNA. Forms a right-handed helical filament on oriC DNA; dsDNA binds to the exterior of the filament while single-stranded (ss)DNA is stabiized in the filament's interior. The ATP-DnaA-oriC complex binds and stabilizes one strand of the AT-rich DNA unwinding element (DUE), permitting loading of DNA polymerase. After initiation quickly degrades to an ADP-DnaA complex that is not apt for DNA replication. Binds acidic phospholipids.</text>
</comment>
<comment type="subunit">
    <text evidence="1">Oligomerizes as a right-handed, spiral filament on DNA at oriC.</text>
</comment>
<comment type="subcellular location">
    <subcellularLocation>
        <location evidence="1">Cytoplasm</location>
    </subcellularLocation>
</comment>
<comment type="domain">
    <text evidence="1">Domain I is involved in oligomerization and binding regulators, domain II is flexibile and of varying length in different bacteria, domain III forms the AAA+ region, while domain IV binds dsDNA.</text>
</comment>
<comment type="similarity">
    <text evidence="1">Belongs to the DnaA family.</text>
</comment>
<sequence length="451" mass="51665">MTENEQIFWNRVLELAQSQLKQATYEFFVHDARLLKVDKHIATIYLDQMKELFWEKNLKDVILTAGFEVYNAQISVDYVFEEDLMIEQNQTKINQKPKQQALNSLPTVTSDLNSKYSFENFIQGDENRWAVAASIAVANTPGTTYNPLFIWGGPGLGKTHLLNAIGNSVLLENPNARIKYITAENFINEFVIHIRLDTMDELKEKFRNLDLLLIDDIQSLAKKTLSGTQEEFFNTFNALHNNNKQIVLTSDRTPDHLNDLEDRLVTRFKWGLTVNITPPDFETRVAILTNKIQEYNFIFPQDTIEYLAGQFDSNVRDLEGALKDISLVANFKQIDTITVDIAAEAIRARKQDGPKMTVIPIEEIQAQVGKFYGVTVKEIKATKRTQNIVLARQVAMFLAREMTDNSLPKIGKEFGGRDHSTVLHAYNKIKNMISQDESLRIEIETIKNKIK</sequence>
<reference key="1">
    <citation type="journal article" date="2007" name="J. Bacteriol.">
        <title>Complete genome of acute rheumatic fever-associated serotype M5 Streptococcus pyogenes strain Manfredo.</title>
        <authorList>
            <person name="Holden M.T.G."/>
            <person name="Scott A."/>
            <person name="Cherevach I."/>
            <person name="Chillingworth T."/>
            <person name="Churcher C."/>
            <person name="Cronin A."/>
            <person name="Dowd L."/>
            <person name="Feltwell T."/>
            <person name="Hamlin N."/>
            <person name="Holroyd S."/>
            <person name="Jagels K."/>
            <person name="Moule S."/>
            <person name="Mungall K."/>
            <person name="Quail M.A."/>
            <person name="Price C."/>
            <person name="Rabbinowitsch E."/>
            <person name="Sharp S."/>
            <person name="Skelton J."/>
            <person name="Whitehead S."/>
            <person name="Barrell B.G."/>
            <person name="Kehoe M."/>
            <person name="Parkhill J."/>
        </authorList>
    </citation>
    <scope>NUCLEOTIDE SEQUENCE [LARGE SCALE GENOMIC DNA]</scope>
    <source>
        <strain>Manfredo</strain>
    </source>
</reference>
<dbReference type="EMBL" id="AM295007">
    <property type="protein sequence ID" value="CAM29345.1"/>
    <property type="molecule type" value="Genomic_DNA"/>
</dbReference>
<dbReference type="RefSeq" id="WP_002987659.1">
    <property type="nucleotide sequence ID" value="NC_009332.1"/>
</dbReference>
<dbReference type="SMR" id="A2RBX3"/>
<dbReference type="GeneID" id="69899953"/>
<dbReference type="KEGG" id="spf:SpyM50001"/>
<dbReference type="HOGENOM" id="CLU_026910_3_2_9"/>
<dbReference type="GO" id="GO:0005737">
    <property type="term" value="C:cytoplasm"/>
    <property type="evidence" value="ECO:0007669"/>
    <property type="project" value="UniProtKB-SubCell"/>
</dbReference>
<dbReference type="GO" id="GO:0005886">
    <property type="term" value="C:plasma membrane"/>
    <property type="evidence" value="ECO:0007669"/>
    <property type="project" value="TreeGrafter"/>
</dbReference>
<dbReference type="GO" id="GO:0005524">
    <property type="term" value="F:ATP binding"/>
    <property type="evidence" value="ECO:0007669"/>
    <property type="project" value="UniProtKB-UniRule"/>
</dbReference>
<dbReference type="GO" id="GO:0016887">
    <property type="term" value="F:ATP hydrolysis activity"/>
    <property type="evidence" value="ECO:0007669"/>
    <property type="project" value="InterPro"/>
</dbReference>
<dbReference type="GO" id="GO:0003688">
    <property type="term" value="F:DNA replication origin binding"/>
    <property type="evidence" value="ECO:0007669"/>
    <property type="project" value="UniProtKB-UniRule"/>
</dbReference>
<dbReference type="GO" id="GO:0008289">
    <property type="term" value="F:lipid binding"/>
    <property type="evidence" value="ECO:0007669"/>
    <property type="project" value="UniProtKB-KW"/>
</dbReference>
<dbReference type="GO" id="GO:0006270">
    <property type="term" value="P:DNA replication initiation"/>
    <property type="evidence" value="ECO:0007669"/>
    <property type="project" value="UniProtKB-UniRule"/>
</dbReference>
<dbReference type="GO" id="GO:0006275">
    <property type="term" value="P:regulation of DNA replication"/>
    <property type="evidence" value="ECO:0007669"/>
    <property type="project" value="UniProtKB-UniRule"/>
</dbReference>
<dbReference type="CDD" id="cd00009">
    <property type="entry name" value="AAA"/>
    <property type="match status" value="1"/>
</dbReference>
<dbReference type="CDD" id="cd06571">
    <property type="entry name" value="Bac_DnaA_C"/>
    <property type="match status" value="1"/>
</dbReference>
<dbReference type="FunFam" id="1.10.1750.10:FF:000002">
    <property type="entry name" value="Chromosomal replication initiator protein DnaA"/>
    <property type="match status" value="1"/>
</dbReference>
<dbReference type="FunFam" id="3.40.50.300:FF:000668">
    <property type="entry name" value="Chromosomal replication initiator protein DnaA"/>
    <property type="match status" value="1"/>
</dbReference>
<dbReference type="Gene3D" id="1.10.1750.10">
    <property type="match status" value="1"/>
</dbReference>
<dbReference type="Gene3D" id="1.10.8.60">
    <property type="match status" value="1"/>
</dbReference>
<dbReference type="Gene3D" id="3.40.50.300">
    <property type="entry name" value="P-loop containing nucleotide triphosphate hydrolases"/>
    <property type="match status" value="1"/>
</dbReference>
<dbReference type="HAMAP" id="MF_00377">
    <property type="entry name" value="DnaA_bact"/>
    <property type="match status" value="1"/>
</dbReference>
<dbReference type="InterPro" id="IPR003593">
    <property type="entry name" value="AAA+_ATPase"/>
</dbReference>
<dbReference type="InterPro" id="IPR001957">
    <property type="entry name" value="Chromosome_initiator_DnaA"/>
</dbReference>
<dbReference type="InterPro" id="IPR020591">
    <property type="entry name" value="Chromosome_initiator_DnaA-like"/>
</dbReference>
<dbReference type="InterPro" id="IPR018312">
    <property type="entry name" value="Chromosome_initiator_DnaA_CS"/>
</dbReference>
<dbReference type="InterPro" id="IPR013159">
    <property type="entry name" value="DnaA_C"/>
</dbReference>
<dbReference type="InterPro" id="IPR013317">
    <property type="entry name" value="DnaA_dom"/>
</dbReference>
<dbReference type="InterPro" id="IPR027417">
    <property type="entry name" value="P-loop_NTPase"/>
</dbReference>
<dbReference type="InterPro" id="IPR010921">
    <property type="entry name" value="Trp_repressor/repl_initiator"/>
</dbReference>
<dbReference type="NCBIfam" id="TIGR00362">
    <property type="entry name" value="DnaA"/>
    <property type="match status" value="1"/>
</dbReference>
<dbReference type="PANTHER" id="PTHR30050">
    <property type="entry name" value="CHROMOSOMAL REPLICATION INITIATOR PROTEIN DNAA"/>
    <property type="match status" value="1"/>
</dbReference>
<dbReference type="PANTHER" id="PTHR30050:SF2">
    <property type="entry name" value="CHROMOSOMAL REPLICATION INITIATOR PROTEIN DNAA"/>
    <property type="match status" value="1"/>
</dbReference>
<dbReference type="Pfam" id="PF00308">
    <property type="entry name" value="Bac_DnaA"/>
    <property type="match status" value="1"/>
</dbReference>
<dbReference type="Pfam" id="PF08299">
    <property type="entry name" value="Bac_DnaA_C"/>
    <property type="match status" value="1"/>
</dbReference>
<dbReference type="PRINTS" id="PR00051">
    <property type="entry name" value="DNAA"/>
</dbReference>
<dbReference type="SMART" id="SM00382">
    <property type="entry name" value="AAA"/>
    <property type="match status" value="1"/>
</dbReference>
<dbReference type="SMART" id="SM00760">
    <property type="entry name" value="Bac_DnaA_C"/>
    <property type="match status" value="1"/>
</dbReference>
<dbReference type="SUPFAM" id="SSF52540">
    <property type="entry name" value="P-loop containing nucleoside triphosphate hydrolases"/>
    <property type="match status" value="1"/>
</dbReference>
<dbReference type="SUPFAM" id="SSF48295">
    <property type="entry name" value="TrpR-like"/>
    <property type="match status" value="1"/>
</dbReference>
<dbReference type="PROSITE" id="PS01008">
    <property type="entry name" value="DNAA"/>
    <property type="match status" value="1"/>
</dbReference>
<protein>
    <recommendedName>
        <fullName evidence="1">Chromosomal replication initiator protein DnaA</fullName>
    </recommendedName>
</protein>